<accession>P39479</accession>
<accession>Q4J748</accession>
<sequence>MDIKEHAEEVWFIVMLVLVLIFFSWNVYYLSTGKSFSLDYGLPTYSGLPEQAQKAVQYFDSHPPSPGQYSEVINGMLVVNLTATQYKWTPDLIVVNKSEPVVLIINSPQVDTGFYLRTPDGVINLNNVAGITSYAYFVINQPGNYTWRDAEYAGYNSSYMTGTVEVVG</sequence>
<proteinExistence type="inferred from homology"/>
<comment type="function">
    <text>The terminal oxidase is the component of the respiratory chain that catalyzes the reduction of oxygen to water. Subunits 1-3 form the functional core of the enzyme complex.</text>
</comment>
<comment type="function">
    <text>Subunit 2 transfers the electrons from caldariella quinol to the bimetallic center of the catalytic subunit 1 that is formed by heme A3 and Cu(B).</text>
</comment>
<comment type="catalytic activity">
    <reaction>
        <text>2 a quinol + O2 = 2 a quinone + 2 H2O</text>
        <dbReference type="Rhea" id="RHEA:55376"/>
        <dbReference type="ChEBI" id="CHEBI:15377"/>
        <dbReference type="ChEBI" id="CHEBI:15379"/>
        <dbReference type="ChEBI" id="CHEBI:24646"/>
        <dbReference type="ChEBI" id="CHEBI:132124"/>
    </reaction>
</comment>
<comment type="subcellular location">
    <subcellularLocation>
        <location>Cell membrane</location>
        <topology>Single-pass membrane protein</topology>
    </subcellularLocation>
</comment>
<comment type="similarity">
    <text evidence="2">Belongs to the cytochrome c oxidase subunit 2 family.</text>
</comment>
<protein>
    <recommendedName>
        <fullName>Quinol oxidase subunit 2</fullName>
        <ecNumber>1.10.3.-</ecNumber>
    </recommendedName>
    <alternativeName>
        <fullName>Cytochrome aa3 subunit 2</fullName>
    </alternativeName>
    <alternativeName>
        <fullName>Oxidase aa(3) subunit 2</fullName>
    </alternativeName>
    <alternativeName>
        <fullName>Quinol oxidase polypeptide II</fullName>
    </alternativeName>
</protein>
<feature type="chain" id="PRO_0000183725" description="Quinol oxidase subunit 2">
    <location>
        <begin position="1"/>
        <end position="168"/>
    </location>
</feature>
<feature type="transmembrane region" description="Helical" evidence="1">
    <location>
        <begin position="9"/>
        <end position="31"/>
    </location>
</feature>
<organism>
    <name type="scientific">Sulfolobus acidocaldarius (strain ATCC 33909 / DSM 639 / JCM 8929 / NBRC 15157 / NCIMB 11770)</name>
    <dbReference type="NCBI Taxonomy" id="330779"/>
    <lineage>
        <taxon>Archaea</taxon>
        <taxon>Thermoproteota</taxon>
        <taxon>Thermoprotei</taxon>
        <taxon>Sulfolobales</taxon>
        <taxon>Sulfolobaceae</taxon>
        <taxon>Sulfolobus</taxon>
    </lineage>
</organism>
<gene>
    <name type="primary">soxA</name>
    <name type="ordered locus">Saci_2089</name>
</gene>
<keyword id="KW-1003">Cell membrane</keyword>
<keyword id="KW-0249">Electron transport</keyword>
<keyword id="KW-0472">Membrane</keyword>
<keyword id="KW-0560">Oxidoreductase</keyword>
<keyword id="KW-1185">Reference proteome</keyword>
<keyword id="KW-0679">Respiratory chain</keyword>
<keyword id="KW-0812">Transmembrane</keyword>
<keyword id="KW-1133">Transmembrane helix</keyword>
<keyword id="KW-0813">Transport</keyword>
<dbReference type="EC" id="1.10.3.-"/>
<dbReference type="EMBL" id="X62643">
    <property type="protein sequence ID" value="CAA44509.1"/>
    <property type="molecule type" value="Genomic_DNA"/>
</dbReference>
<dbReference type="EMBL" id="CP000077">
    <property type="protein sequence ID" value="AAY81383.1"/>
    <property type="molecule type" value="Genomic_DNA"/>
</dbReference>
<dbReference type="PIR" id="S21041">
    <property type="entry name" value="S21041"/>
</dbReference>
<dbReference type="RefSeq" id="WP_011278885.1">
    <property type="nucleotide sequence ID" value="NC_007181.1"/>
</dbReference>
<dbReference type="SMR" id="P39479"/>
<dbReference type="STRING" id="330779.Saci_2089"/>
<dbReference type="TCDB" id="3.D.4.1.1">
    <property type="family name" value="the proton-translocating cytochrome oxidase (cox) superfamily"/>
</dbReference>
<dbReference type="GeneID" id="14552604"/>
<dbReference type="GeneID" id="78442449"/>
<dbReference type="KEGG" id="sai:Saci_2089"/>
<dbReference type="PATRIC" id="fig|330779.12.peg.2091"/>
<dbReference type="eggNOG" id="arCOG01236">
    <property type="taxonomic scope" value="Archaea"/>
</dbReference>
<dbReference type="HOGENOM" id="CLU_1582965_0_0_2"/>
<dbReference type="BioCyc" id="MetaCyc:MONOMER-21017"/>
<dbReference type="BRENDA" id="7.1.1.4">
    <property type="organism ID" value="6160"/>
</dbReference>
<dbReference type="Proteomes" id="UP000001018">
    <property type="component" value="Chromosome"/>
</dbReference>
<dbReference type="GO" id="GO:0005886">
    <property type="term" value="C:plasma membrane"/>
    <property type="evidence" value="ECO:0007669"/>
    <property type="project" value="UniProtKB-SubCell"/>
</dbReference>
<dbReference type="GO" id="GO:0005507">
    <property type="term" value="F:copper ion binding"/>
    <property type="evidence" value="ECO:0007669"/>
    <property type="project" value="InterPro"/>
</dbReference>
<dbReference type="GO" id="GO:0004129">
    <property type="term" value="F:cytochrome-c oxidase activity"/>
    <property type="evidence" value="ECO:0007669"/>
    <property type="project" value="InterPro"/>
</dbReference>
<dbReference type="GO" id="GO:0016682">
    <property type="term" value="F:oxidoreductase activity, acting on diphenols and related substances as donors, oxygen as acceptor"/>
    <property type="evidence" value="ECO:0000250"/>
    <property type="project" value="UniProtKB"/>
</dbReference>
<dbReference type="GO" id="GO:0042773">
    <property type="term" value="P:ATP synthesis coupled electron transport"/>
    <property type="evidence" value="ECO:0000250"/>
    <property type="project" value="UniProtKB"/>
</dbReference>
<dbReference type="CDD" id="cd13842">
    <property type="entry name" value="CuRO_HCO_II_like"/>
    <property type="match status" value="1"/>
</dbReference>
<dbReference type="Gene3D" id="2.60.40.420">
    <property type="entry name" value="Cupredoxins - blue copper proteins"/>
    <property type="match status" value="1"/>
</dbReference>
<dbReference type="InterPro" id="IPR002429">
    <property type="entry name" value="CcO_II-like_C"/>
</dbReference>
<dbReference type="InterPro" id="IPR008972">
    <property type="entry name" value="Cupredoxin"/>
</dbReference>
<dbReference type="InterPro" id="IPR053624">
    <property type="entry name" value="Cytochrome_c_oxidase_su2-like"/>
</dbReference>
<dbReference type="NCBIfam" id="NF041074">
    <property type="entry name" value="quin_ox_SoxA"/>
    <property type="match status" value="1"/>
</dbReference>
<dbReference type="SUPFAM" id="SSF49503">
    <property type="entry name" value="Cupredoxins"/>
    <property type="match status" value="1"/>
</dbReference>
<dbReference type="PROSITE" id="PS50857">
    <property type="entry name" value="COX2_CUA"/>
    <property type="match status" value="1"/>
</dbReference>
<reference key="1">
    <citation type="journal article" date="1992" name="EMBO J.">
        <title>An archaebacterial terminal oxidase combines core structures of two mitochondrial respiratory complexes.</title>
        <authorList>
            <person name="Luebben M."/>
            <person name="Kolmerer B."/>
            <person name="Saraste M."/>
        </authorList>
    </citation>
    <scope>NUCLEOTIDE SEQUENCE [GENOMIC DNA]</scope>
    <source>
        <strain>ATCC 33909 / DSM 639 / JCM 8929 / NBRC 15157 / NCIMB 11770</strain>
    </source>
</reference>
<reference key="2">
    <citation type="journal article" date="2005" name="J. Bacteriol.">
        <title>The genome of Sulfolobus acidocaldarius, a model organism of the Crenarchaeota.</title>
        <authorList>
            <person name="Chen L."/>
            <person name="Bruegger K."/>
            <person name="Skovgaard M."/>
            <person name="Redder P."/>
            <person name="She Q."/>
            <person name="Torarinsson E."/>
            <person name="Greve B."/>
            <person name="Awayez M."/>
            <person name="Zibat A."/>
            <person name="Klenk H.-P."/>
            <person name="Garrett R.A."/>
        </authorList>
    </citation>
    <scope>NUCLEOTIDE SEQUENCE [LARGE SCALE GENOMIC DNA]</scope>
    <source>
        <strain>ATCC 33909 / DSM 639 / JCM 8929 / NBRC 15157 / NCIMB 11770</strain>
    </source>
</reference>
<evidence type="ECO:0000255" key="1"/>
<evidence type="ECO:0000305" key="2"/>
<name>QOX2_SULAC</name>